<protein>
    <recommendedName>
        <fullName>Probable cell wall hydrolase LytN</fullName>
        <ecNumber>3.-.-.-</ecNumber>
    </recommendedName>
</protein>
<organism>
    <name type="scientific">Staphylococcus aureus (strain NCTC 8325 / PS 47)</name>
    <dbReference type="NCBI Taxonomy" id="93061"/>
    <lineage>
        <taxon>Bacteria</taxon>
        <taxon>Bacillati</taxon>
        <taxon>Bacillota</taxon>
        <taxon>Bacilli</taxon>
        <taxon>Bacillales</taxon>
        <taxon>Staphylococcaceae</taxon>
        <taxon>Staphylococcus</taxon>
    </lineage>
</organism>
<proteinExistence type="evidence at transcript level"/>
<comment type="function">
    <text>Probably involved in peptidoglycan hydrolysis.</text>
</comment>
<comment type="subcellular location">
    <subcellularLocation>
        <location evidence="4">Secreted</location>
    </subcellularLocation>
</comment>
<comment type="induction">
    <text>Repressed by MgrA.</text>
</comment>
<comment type="sequence caution" evidence="4">
    <conflict type="erroneous initiation">
        <sequence resource="EMBL-CDS" id="ABD30323"/>
    </conflict>
</comment>
<feature type="signal peptide" evidence="1">
    <location>
        <begin position="1"/>
        <end position="49"/>
    </location>
</feature>
<feature type="chain" id="PRO_0000227560" description="Probable cell wall hydrolase LytN">
    <location>
        <begin position="50"/>
        <end position="383"/>
    </location>
</feature>
<feature type="domain" description="LysM" evidence="3">
    <location>
        <begin position="175"/>
        <end position="219"/>
    </location>
</feature>
<feature type="domain" description="Peptidase C51" evidence="2">
    <location>
        <begin position="241"/>
        <end position="378"/>
    </location>
</feature>
<feature type="sequence conflict" description="In Ref. 2; AAD23962." evidence="4" ref="2">
    <original>V</original>
    <variation>I</variation>
    <location>
        <position position="3"/>
    </location>
</feature>
<feature type="sequence conflict" description="In Ref. 2; AAD23962." evidence="4" ref="2">
    <original>F</original>
    <variation>S</variation>
    <location>
        <position position="10"/>
    </location>
</feature>
<feature type="sequence conflict" description="In Ref. 2; AAD23962." evidence="4" ref="2">
    <original>L</original>
    <variation>P</variation>
    <location>
        <position position="136"/>
    </location>
</feature>
<feature type="sequence conflict" description="In Ref. 1; BAA33856." evidence="4" ref="1">
    <original>Q</original>
    <variation>P</variation>
    <location>
        <position position="200"/>
    </location>
</feature>
<sequence length="383" mass="43183">MFVYYCKECFIMNKQQSKVRYSIRKVSIGILSISIGMFLALGMSNKAYADEIDKSKDFTRGYEQNVFAKSELNANKNTTKDKIKNEGAVKTSDTSLKLDNKSAISNGNEINQDIKISNTPKNSSQGNNLVINNNELTKEIKIANLEAQNSNQKKTNKVTNNYFGYYSFREAPKTQIYTVKKGDTLSAIALKYKTTVSNIQNTNNIANPNLIFIGQKLKVPMTPLVEPKPKTVSSNNKSNSNSSTLNYLKTLENRGWDFDGSYGWQCFDLVNVYWNHLYGHGLKGYGAKDIPYANNFNSEAKIYHNTPTFKAEPGDLVVFSGRFGGGYGHTAIVLNGDYDGKLMKFQSLDQNWNNGGWRKAEVAHKVVHNYENDMIFIRPFKKA</sequence>
<reference key="1">
    <citation type="journal article" date="1998" name="Gene">
        <title>Identification and molecular characterization of a gene homologous to epr (endopeptidase resistance gene) in Staphylococcus aureus.</title>
        <authorList>
            <person name="Sugai M."/>
            <person name="Fujiwara T."/>
            <person name="Komatsuzawa H."/>
            <person name="Suginaka H."/>
        </authorList>
    </citation>
    <scope>NUCLEOTIDE SEQUENCE [GENOMIC DNA]</scope>
    <scope>PROBABLE FUNCTION</scope>
</reference>
<reference key="2">
    <citation type="journal article" date="1999" name="FEMS Microbiol. Lett.">
        <title>Identification of three additional femAB-like open reading frames in Staphylococcus aureus.</title>
        <authorList>
            <person name="Tschierske M."/>
            <person name="Mori C."/>
            <person name="Rohrer S."/>
            <person name="Ehlert K."/>
            <person name="Shaw K.J."/>
            <person name="Berger-Baechi B."/>
        </authorList>
    </citation>
    <scope>NUCLEOTIDE SEQUENCE [GENOMIC DNA]</scope>
</reference>
<reference key="3">
    <citation type="book" date="2006" name="Gram positive pathogens, 2nd edition">
        <title>The Staphylococcus aureus NCTC 8325 genome.</title>
        <editorList>
            <person name="Fischetti V."/>
            <person name="Novick R."/>
            <person name="Ferretti J."/>
            <person name="Portnoy D."/>
            <person name="Rood J."/>
        </editorList>
        <authorList>
            <person name="Gillaspy A.F."/>
            <person name="Worrell V."/>
            <person name="Orvis J."/>
            <person name="Roe B.A."/>
            <person name="Dyer D.W."/>
            <person name="Iandolo J.J."/>
        </authorList>
    </citation>
    <scope>NUCLEOTIDE SEQUENCE [LARGE SCALE GENOMIC DNA]</scope>
    <source>
        <strain>NCTC 8325 / PS 47</strain>
    </source>
</reference>
<reference key="4">
    <citation type="journal article" date="2003" name="Mol. Microbiol.">
        <title>Characterization of RAT, an autolysis regulator in Staphylococcus aureus.</title>
        <authorList>
            <person name="Ingavale S.S."/>
            <person name="Van Wamel W."/>
            <person name="Cheung A.L."/>
        </authorList>
    </citation>
    <scope>REGULATION BY MGRA</scope>
</reference>
<dbReference type="EC" id="3.-.-.-"/>
<dbReference type="EMBL" id="AB015195">
    <property type="protein sequence ID" value="BAA33856.1"/>
    <property type="molecule type" value="Genomic_DNA"/>
</dbReference>
<dbReference type="EMBL" id="AF106851">
    <property type="protein sequence ID" value="AAD23962.1"/>
    <property type="molecule type" value="Genomic_DNA"/>
</dbReference>
<dbReference type="EMBL" id="CP000253">
    <property type="protein sequence ID" value="ABD30323.1"/>
    <property type="status" value="ALT_INIT"/>
    <property type="molecule type" value="Genomic_DNA"/>
</dbReference>
<dbReference type="RefSeq" id="YP_499755.1">
    <property type="nucleotide sequence ID" value="NC_007795.1"/>
</dbReference>
<dbReference type="SMR" id="Q9ZNI1"/>
<dbReference type="STRING" id="93061.SAOUHSC_01219"/>
<dbReference type="CAZy" id="CBM50">
    <property type="family name" value="Carbohydrate-Binding Module Family 50"/>
</dbReference>
<dbReference type="PaxDb" id="1280-SAXN108_1249"/>
<dbReference type="GeneID" id="3919484"/>
<dbReference type="KEGG" id="sao:SAOUHSC_01219"/>
<dbReference type="PATRIC" id="fig|93061.5.peg.1117"/>
<dbReference type="eggNOG" id="COG1388">
    <property type="taxonomic scope" value="Bacteria"/>
</dbReference>
<dbReference type="HOGENOM" id="CLU_060961_0_0_9"/>
<dbReference type="OrthoDB" id="2195319at2"/>
<dbReference type="Proteomes" id="UP000008816">
    <property type="component" value="Chromosome"/>
</dbReference>
<dbReference type="GO" id="GO:0005576">
    <property type="term" value="C:extracellular region"/>
    <property type="evidence" value="ECO:0007669"/>
    <property type="project" value="UniProtKB-SubCell"/>
</dbReference>
<dbReference type="GO" id="GO:0016787">
    <property type="term" value="F:hydrolase activity"/>
    <property type="evidence" value="ECO:0007669"/>
    <property type="project" value="UniProtKB-KW"/>
</dbReference>
<dbReference type="GO" id="GO:0008932">
    <property type="term" value="F:lytic endotransglycosylase activity"/>
    <property type="evidence" value="ECO:0000318"/>
    <property type="project" value="GO_Central"/>
</dbReference>
<dbReference type="GO" id="GO:0071555">
    <property type="term" value="P:cell wall organization"/>
    <property type="evidence" value="ECO:0007669"/>
    <property type="project" value="UniProtKB-KW"/>
</dbReference>
<dbReference type="CDD" id="cd00118">
    <property type="entry name" value="LysM"/>
    <property type="match status" value="1"/>
</dbReference>
<dbReference type="FunFam" id="3.10.350.10:FF:000021">
    <property type="entry name" value="Probable cell wall hydrolase LytN"/>
    <property type="match status" value="1"/>
</dbReference>
<dbReference type="FunFam" id="3.90.1720.10:FF:000015">
    <property type="entry name" value="Probable cell wall hydrolase LytN"/>
    <property type="match status" value="1"/>
</dbReference>
<dbReference type="Gene3D" id="3.90.1720.10">
    <property type="entry name" value="endopeptidase domain like (from Nostoc punctiforme)"/>
    <property type="match status" value="1"/>
</dbReference>
<dbReference type="Gene3D" id="3.10.350.10">
    <property type="entry name" value="LysM domain"/>
    <property type="match status" value="1"/>
</dbReference>
<dbReference type="InterPro" id="IPR007921">
    <property type="entry name" value="CHAP_dom"/>
</dbReference>
<dbReference type="InterPro" id="IPR018392">
    <property type="entry name" value="LysM_dom"/>
</dbReference>
<dbReference type="InterPro" id="IPR036779">
    <property type="entry name" value="LysM_dom_sf"/>
</dbReference>
<dbReference type="InterPro" id="IPR038765">
    <property type="entry name" value="Papain-like_cys_pep_sf"/>
</dbReference>
<dbReference type="InterPro" id="IPR005877">
    <property type="entry name" value="YSIRK_signal_dom"/>
</dbReference>
<dbReference type="NCBIfam" id="TIGR01168">
    <property type="entry name" value="YSIRK_signal"/>
    <property type="match status" value="1"/>
</dbReference>
<dbReference type="PANTHER" id="PTHR33734">
    <property type="entry name" value="LYSM DOMAIN-CONTAINING GPI-ANCHORED PROTEIN 2"/>
    <property type="match status" value="1"/>
</dbReference>
<dbReference type="PANTHER" id="PTHR33734:SF22">
    <property type="entry name" value="MEMBRANE-BOUND LYTIC MUREIN TRANSGLYCOSYLASE D"/>
    <property type="match status" value="1"/>
</dbReference>
<dbReference type="Pfam" id="PF05257">
    <property type="entry name" value="CHAP"/>
    <property type="match status" value="1"/>
</dbReference>
<dbReference type="Pfam" id="PF01476">
    <property type="entry name" value="LysM"/>
    <property type="match status" value="1"/>
</dbReference>
<dbReference type="SMART" id="SM00257">
    <property type="entry name" value="LysM"/>
    <property type="match status" value="1"/>
</dbReference>
<dbReference type="SUPFAM" id="SSF54001">
    <property type="entry name" value="Cysteine proteinases"/>
    <property type="match status" value="1"/>
</dbReference>
<dbReference type="SUPFAM" id="SSF54106">
    <property type="entry name" value="LysM domain"/>
    <property type="match status" value="1"/>
</dbReference>
<dbReference type="PROSITE" id="PS50911">
    <property type="entry name" value="CHAP"/>
    <property type="match status" value="1"/>
</dbReference>
<dbReference type="PROSITE" id="PS51782">
    <property type="entry name" value="LYSM"/>
    <property type="match status" value="1"/>
</dbReference>
<name>LYTN_STAA8</name>
<keyword id="KW-0961">Cell wall biogenesis/degradation</keyword>
<keyword id="KW-0378">Hydrolase</keyword>
<keyword id="KW-1185">Reference proteome</keyword>
<keyword id="KW-0964">Secreted</keyword>
<keyword id="KW-0732">Signal</keyword>
<accession>Q9ZNI1</accession>
<accession>Q2FZ35</accession>
<accession>Q9S684</accession>
<gene>
    <name type="primary">lytN</name>
    <name type="ordered locus">SAOUHSC_01219</name>
</gene>
<evidence type="ECO:0000255" key="1"/>
<evidence type="ECO:0000255" key="2">
    <source>
        <dbReference type="PROSITE-ProRule" id="PRU00048"/>
    </source>
</evidence>
<evidence type="ECO:0000255" key="3">
    <source>
        <dbReference type="PROSITE-ProRule" id="PRU01118"/>
    </source>
</evidence>
<evidence type="ECO:0000305" key="4"/>